<sequence>MTIEVSNESGIDVSEEELISVARFVIGKMDVNPAAELSMLLLDTAAMADLHMRWMDLPGPTDVMSFPMDELEPGGRPDAPEPGPSMLGDIVLCPEFAAKQAADAGHTLGQELALLTVHGVLHLLGYDHAEPDEEKEMFALQRELLEEWVADQVQAYHQDRQSQKDQRLLDKSRYFDELNHGDTP</sequence>
<dbReference type="EC" id="3.1.-.-" evidence="1"/>
<dbReference type="EMBL" id="CP000511">
    <property type="protein sequence ID" value="ABM14612.1"/>
    <property type="molecule type" value="Genomic_DNA"/>
</dbReference>
<dbReference type="RefSeq" id="WP_011780999.1">
    <property type="nucleotide sequence ID" value="NZ_JACKSD010000345.1"/>
</dbReference>
<dbReference type="SMR" id="A1TBR2"/>
<dbReference type="STRING" id="350058.Mvan_3831"/>
<dbReference type="KEGG" id="mva:Mvan_3831"/>
<dbReference type="eggNOG" id="COG0319">
    <property type="taxonomic scope" value="Bacteria"/>
</dbReference>
<dbReference type="HOGENOM" id="CLU_106710_3_2_11"/>
<dbReference type="Proteomes" id="UP000009159">
    <property type="component" value="Chromosome"/>
</dbReference>
<dbReference type="GO" id="GO:0005737">
    <property type="term" value="C:cytoplasm"/>
    <property type="evidence" value="ECO:0007669"/>
    <property type="project" value="UniProtKB-SubCell"/>
</dbReference>
<dbReference type="GO" id="GO:0004222">
    <property type="term" value="F:metalloendopeptidase activity"/>
    <property type="evidence" value="ECO:0007669"/>
    <property type="project" value="InterPro"/>
</dbReference>
<dbReference type="GO" id="GO:0004521">
    <property type="term" value="F:RNA endonuclease activity"/>
    <property type="evidence" value="ECO:0007669"/>
    <property type="project" value="UniProtKB-UniRule"/>
</dbReference>
<dbReference type="GO" id="GO:0008270">
    <property type="term" value="F:zinc ion binding"/>
    <property type="evidence" value="ECO:0007669"/>
    <property type="project" value="UniProtKB-UniRule"/>
</dbReference>
<dbReference type="GO" id="GO:0006364">
    <property type="term" value="P:rRNA processing"/>
    <property type="evidence" value="ECO:0007669"/>
    <property type="project" value="UniProtKB-UniRule"/>
</dbReference>
<dbReference type="Gene3D" id="3.40.390.30">
    <property type="entry name" value="Metalloproteases ('zincins'), catalytic domain"/>
    <property type="match status" value="1"/>
</dbReference>
<dbReference type="HAMAP" id="MF_00009">
    <property type="entry name" value="Endoribonucl_YbeY"/>
    <property type="match status" value="1"/>
</dbReference>
<dbReference type="InterPro" id="IPR023091">
    <property type="entry name" value="MetalPrtase_cat_dom_sf_prd"/>
</dbReference>
<dbReference type="InterPro" id="IPR002036">
    <property type="entry name" value="YbeY"/>
</dbReference>
<dbReference type="InterPro" id="IPR020549">
    <property type="entry name" value="YbeY_CS"/>
</dbReference>
<dbReference type="NCBIfam" id="TIGR00043">
    <property type="entry name" value="rRNA maturation RNase YbeY"/>
    <property type="match status" value="1"/>
</dbReference>
<dbReference type="PANTHER" id="PTHR46986">
    <property type="entry name" value="ENDORIBONUCLEASE YBEY, CHLOROPLASTIC"/>
    <property type="match status" value="1"/>
</dbReference>
<dbReference type="PANTHER" id="PTHR46986:SF1">
    <property type="entry name" value="ENDORIBONUCLEASE YBEY, CHLOROPLASTIC"/>
    <property type="match status" value="1"/>
</dbReference>
<dbReference type="Pfam" id="PF02130">
    <property type="entry name" value="YbeY"/>
    <property type="match status" value="1"/>
</dbReference>
<dbReference type="SUPFAM" id="SSF55486">
    <property type="entry name" value="Metalloproteases ('zincins'), catalytic domain"/>
    <property type="match status" value="1"/>
</dbReference>
<dbReference type="PROSITE" id="PS01306">
    <property type="entry name" value="UPF0054"/>
    <property type="match status" value="1"/>
</dbReference>
<name>YBEY_MYCVP</name>
<feature type="chain" id="PRO_0000284247" description="Endoribonuclease YbeY">
    <location>
        <begin position="1"/>
        <end position="184"/>
    </location>
</feature>
<feature type="region of interest" description="Disordered" evidence="2">
    <location>
        <begin position="156"/>
        <end position="184"/>
    </location>
</feature>
<feature type="compositionally biased region" description="Basic and acidic residues" evidence="2">
    <location>
        <begin position="157"/>
        <end position="184"/>
    </location>
</feature>
<feature type="binding site" evidence="1">
    <location>
        <position position="118"/>
    </location>
    <ligand>
        <name>Zn(2+)</name>
        <dbReference type="ChEBI" id="CHEBI:29105"/>
        <note>catalytic</note>
    </ligand>
</feature>
<feature type="binding site" evidence="1">
    <location>
        <position position="122"/>
    </location>
    <ligand>
        <name>Zn(2+)</name>
        <dbReference type="ChEBI" id="CHEBI:29105"/>
        <note>catalytic</note>
    </ligand>
</feature>
<feature type="binding site" evidence="1">
    <location>
        <position position="128"/>
    </location>
    <ligand>
        <name>Zn(2+)</name>
        <dbReference type="ChEBI" id="CHEBI:29105"/>
        <note>catalytic</note>
    </ligand>
</feature>
<gene>
    <name evidence="1" type="primary">ybeY</name>
    <name type="ordered locus">Mvan_3831</name>
</gene>
<keyword id="KW-0963">Cytoplasm</keyword>
<keyword id="KW-0255">Endonuclease</keyword>
<keyword id="KW-0378">Hydrolase</keyword>
<keyword id="KW-0479">Metal-binding</keyword>
<keyword id="KW-0540">Nuclease</keyword>
<keyword id="KW-0690">Ribosome biogenesis</keyword>
<keyword id="KW-0698">rRNA processing</keyword>
<keyword id="KW-0862">Zinc</keyword>
<organism>
    <name type="scientific">Mycolicibacterium vanbaalenii (strain DSM 7251 / JCM 13017 / BCRC 16820 / KCTC 9966 / NRRL B-24157 / PYR-1)</name>
    <name type="common">Mycobacterium vanbaalenii</name>
    <dbReference type="NCBI Taxonomy" id="350058"/>
    <lineage>
        <taxon>Bacteria</taxon>
        <taxon>Bacillati</taxon>
        <taxon>Actinomycetota</taxon>
        <taxon>Actinomycetes</taxon>
        <taxon>Mycobacteriales</taxon>
        <taxon>Mycobacteriaceae</taxon>
        <taxon>Mycolicibacterium</taxon>
    </lineage>
</organism>
<reference key="1">
    <citation type="submission" date="2006-12" db="EMBL/GenBank/DDBJ databases">
        <title>Complete sequence of Mycobacterium vanbaalenii PYR-1.</title>
        <authorList>
            <consortium name="US DOE Joint Genome Institute"/>
            <person name="Copeland A."/>
            <person name="Lucas S."/>
            <person name="Lapidus A."/>
            <person name="Barry K."/>
            <person name="Detter J.C."/>
            <person name="Glavina del Rio T."/>
            <person name="Hammon N."/>
            <person name="Israni S."/>
            <person name="Dalin E."/>
            <person name="Tice H."/>
            <person name="Pitluck S."/>
            <person name="Singan V."/>
            <person name="Schmutz J."/>
            <person name="Larimer F."/>
            <person name="Land M."/>
            <person name="Hauser L."/>
            <person name="Kyrpides N."/>
            <person name="Anderson I.J."/>
            <person name="Miller C."/>
            <person name="Richardson P."/>
        </authorList>
    </citation>
    <scope>NUCLEOTIDE SEQUENCE [LARGE SCALE GENOMIC DNA]</scope>
    <source>
        <strain>DSM 7251 / JCM 13017 / BCRC 16820 / KCTC 9966 / NRRL B-24157 / PYR-1</strain>
    </source>
</reference>
<evidence type="ECO:0000255" key="1">
    <source>
        <dbReference type="HAMAP-Rule" id="MF_00009"/>
    </source>
</evidence>
<evidence type="ECO:0000256" key="2">
    <source>
        <dbReference type="SAM" id="MobiDB-lite"/>
    </source>
</evidence>
<protein>
    <recommendedName>
        <fullName evidence="1">Endoribonuclease YbeY</fullName>
        <ecNumber evidence="1">3.1.-.-</ecNumber>
    </recommendedName>
</protein>
<proteinExistence type="inferred from homology"/>
<accession>A1TBR2</accession>
<comment type="function">
    <text evidence="1">Single strand-specific metallo-endoribonuclease involved in late-stage 70S ribosome quality control and in maturation of the 3' terminus of the 16S rRNA.</text>
</comment>
<comment type="cofactor">
    <cofactor evidence="1">
        <name>Zn(2+)</name>
        <dbReference type="ChEBI" id="CHEBI:29105"/>
    </cofactor>
    <text evidence="1">Binds 1 zinc ion.</text>
</comment>
<comment type="subcellular location">
    <subcellularLocation>
        <location evidence="1">Cytoplasm</location>
    </subcellularLocation>
</comment>
<comment type="similarity">
    <text evidence="1">Belongs to the endoribonuclease YbeY family.</text>
</comment>